<keyword id="KW-0648">Protein biosynthesis</keyword>
<keyword id="KW-1185">Reference proteome</keyword>
<keyword id="KW-0808">Transferase</keyword>
<accession>Q65JS5</accession>
<accession>Q62V80</accession>
<sequence length="316" mass="34580">MTRIVFMGTPDFSVPVLGTLIDDGYEVVGVVTQPDRPKGRKKVMTPPPVKEEALRRGIPVLQPEKVREEAETDKILALEPDLIVTAAFGQILPKKLLDYPKYGCINVHASLLPELRGGAPIHYAILEGKEKTGVTIMYMVEKLDAGDMLAKVEVDIEETDNVGTLHDKLSKAGAALLSETVPRIIDGSVTPEKQDEQKATYAPNIKREQELIDWSKPGEVLYNQVRGLNPWPVAYTVLNGQTLKVWAAKKCQALKQAEPGEIVTVEKDGIVVATGNDTALKLTEVQPAGKKRMKAEDFVRGAGLQAGMKLGHDDEK</sequence>
<comment type="function">
    <text evidence="1">Attaches a formyl group to the free amino group of methionyl-tRNA(fMet). The formyl group appears to play a dual role in the initiator identity of N-formylmethionyl-tRNA by promoting its recognition by IF2 and preventing the misappropriation of this tRNA by the elongation apparatus.</text>
</comment>
<comment type="catalytic activity">
    <reaction evidence="1">
        <text>L-methionyl-tRNA(fMet) + (6R)-10-formyltetrahydrofolate = N-formyl-L-methionyl-tRNA(fMet) + (6S)-5,6,7,8-tetrahydrofolate + H(+)</text>
        <dbReference type="Rhea" id="RHEA:24380"/>
        <dbReference type="Rhea" id="RHEA-COMP:9952"/>
        <dbReference type="Rhea" id="RHEA-COMP:9953"/>
        <dbReference type="ChEBI" id="CHEBI:15378"/>
        <dbReference type="ChEBI" id="CHEBI:57453"/>
        <dbReference type="ChEBI" id="CHEBI:78530"/>
        <dbReference type="ChEBI" id="CHEBI:78844"/>
        <dbReference type="ChEBI" id="CHEBI:195366"/>
        <dbReference type="EC" id="2.1.2.9"/>
    </reaction>
</comment>
<comment type="similarity">
    <text evidence="1">Belongs to the Fmt family.</text>
</comment>
<organism>
    <name type="scientific">Bacillus licheniformis (strain ATCC 14580 / DSM 13 / JCM 2505 / CCUG 7422 / NBRC 12200 / NCIMB 9375 / NCTC 10341 / NRRL NRS-1264 / Gibson 46)</name>
    <dbReference type="NCBI Taxonomy" id="279010"/>
    <lineage>
        <taxon>Bacteria</taxon>
        <taxon>Bacillati</taxon>
        <taxon>Bacillota</taxon>
        <taxon>Bacilli</taxon>
        <taxon>Bacillales</taxon>
        <taxon>Bacillaceae</taxon>
        <taxon>Bacillus</taxon>
    </lineage>
</organism>
<proteinExistence type="inferred from homology"/>
<feature type="chain" id="PRO_0000082916" description="Methionyl-tRNA formyltransferase">
    <location>
        <begin position="1"/>
        <end position="316"/>
    </location>
</feature>
<feature type="binding site" evidence="1">
    <location>
        <begin position="110"/>
        <end position="113"/>
    </location>
    <ligand>
        <name>(6S)-5,6,7,8-tetrahydrofolate</name>
        <dbReference type="ChEBI" id="CHEBI:57453"/>
    </ligand>
</feature>
<evidence type="ECO:0000255" key="1">
    <source>
        <dbReference type="HAMAP-Rule" id="MF_00182"/>
    </source>
</evidence>
<name>FMT_BACLD</name>
<dbReference type="EC" id="2.1.2.9" evidence="1"/>
<dbReference type="EMBL" id="AE017333">
    <property type="protein sequence ID" value="AAU40689.1"/>
    <property type="molecule type" value="Genomic_DNA"/>
</dbReference>
<dbReference type="EMBL" id="CP000002">
    <property type="protein sequence ID" value="AAU23329.1"/>
    <property type="molecule type" value="Genomic_DNA"/>
</dbReference>
<dbReference type="RefSeq" id="WP_003181670.1">
    <property type="nucleotide sequence ID" value="NC_006322.1"/>
</dbReference>
<dbReference type="SMR" id="Q65JS5"/>
<dbReference type="STRING" id="279010.BL02298"/>
<dbReference type="GeneID" id="92861613"/>
<dbReference type="KEGG" id="bld:BLi01794"/>
<dbReference type="KEGG" id="bli:BL02298"/>
<dbReference type="eggNOG" id="COG0223">
    <property type="taxonomic scope" value="Bacteria"/>
</dbReference>
<dbReference type="HOGENOM" id="CLU_033347_1_1_9"/>
<dbReference type="Proteomes" id="UP000000606">
    <property type="component" value="Chromosome"/>
</dbReference>
<dbReference type="GO" id="GO:0005829">
    <property type="term" value="C:cytosol"/>
    <property type="evidence" value="ECO:0007669"/>
    <property type="project" value="TreeGrafter"/>
</dbReference>
<dbReference type="GO" id="GO:0004479">
    <property type="term" value="F:methionyl-tRNA formyltransferase activity"/>
    <property type="evidence" value="ECO:0007669"/>
    <property type="project" value="UniProtKB-UniRule"/>
</dbReference>
<dbReference type="CDD" id="cd08646">
    <property type="entry name" value="FMT_core_Met-tRNA-FMT_N"/>
    <property type="match status" value="1"/>
</dbReference>
<dbReference type="CDD" id="cd08704">
    <property type="entry name" value="Met_tRNA_FMT_C"/>
    <property type="match status" value="1"/>
</dbReference>
<dbReference type="FunFam" id="3.40.50.170:FF:000004">
    <property type="entry name" value="Methionyl-tRNA formyltransferase"/>
    <property type="match status" value="1"/>
</dbReference>
<dbReference type="Gene3D" id="3.10.25.10">
    <property type="entry name" value="Formyl transferase, C-terminal domain"/>
    <property type="match status" value="1"/>
</dbReference>
<dbReference type="Gene3D" id="3.40.50.170">
    <property type="entry name" value="Formyl transferase, N-terminal domain"/>
    <property type="match status" value="1"/>
</dbReference>
<dbReference type="HAMAP" id="MF_00182">
    <property type="entry name" value="Formyl_trans"/>
    <property type="match status" value="1"/>
</dbReference>
<dbReference type="InterPro" id="IPR005794">
    <property type="entry name" value="Fmt"/>
</dbReference>
<dbReference type="InterPro" id="IPR005793">
    <property type="entry name" value="Formyl_trans_C"/>
</dbReference>
<dbReference type="InterPro" id="IPR037022">
    <property type="entry name" value="Formyl_trans_C_sf"/>
</dbReference>
<dbReference type="InterPro" id="IPR002376">
    <property type="entry name" value="Formyl_transf_N"/>
</dbReference>
<dbReference type="InterPro" id="IPR036477">
    <property type="entry name" value="Formyl_transf_N_sf"/>
</dbReference>
<dbReference type="InterPro" id="IPR011034">
    <property type="entry name" value="Formyl_transferase-like_C_sf"/>
</dbReference>
<dbReference type="InterPro" id="IPR001555">
    <property type="entry name" value="GART_AS"/>
</dbReference>
<dbReference type="InterPro" id="IPR044135">
    <property type="entry name" value="Met-tRNA-FMT_C"/>
</dbReference>
<dbReference type="InterPro" id="IPR041711">
    <property type="entry name" value="Met-tRNA-FMT_N"/>
</dbReference>
<dbReference type="NCBIfam" id="TIGR00460">
    <property type="entry name" value="fmt"/>
    <property type="match status" value="1"/>
</dbReference>
<dbReference type="PANTHER" id="PTHR11138">
    <property type="entry name" value="METHIONYL-TRNA FORMYLTRANSFERASE"/>
    <property type="match status" value="1"/>
</dbReference>
<dbReference type="PANTHER" id="PTHR11138:SF5">
    <property type="entry name" value="METHIONYL-TRNA FORMYLTRANSFERASE, MITOCHONDRIAL"/>
    <property type="match status" value="1"/>
</dbReference>
<dbReference type="Pfam" id="PF02911">
    <property type="entry name" value="Formyl_trans_C"/>
    <property type="match status" value="1"/>
</dbReference>
<dbReference type="Pfam" id="PF00551">
    <property type="entry name" value="Formyl_trans_N"/>
    <property type="match status" value="1"/>
</dbReference>
<dbReference type="SUPFAM" id="SSF50486">
    <property type="entry name" value="FMT C-terminal domain-like"/>
    <property type="match status" value="1"/>
</dbReference>
<dbReference type="SUPFAM" id="SSF53328">
    <property type="entry name" value="Formyltransferase"/>
    <property type="match status" value="1"/>
</dbReference>
<dbReference type="PROSITE" id="PS00373">
    <property type="entry name" value="GART"/>
    <property type="match status" value="1"/>
</dbReference>
<gene>
    <name evidence="1" type="primary">fmt</name>
    <name type="ordered locus">BLi01794</name>
    <name type="ordered locus">BL02298</name>
</gene>
<reference key="1">
    <citation type="journal article" date="2004" name="J. Mol. Microbiol. Biotechnol.">
        <title>The complete genome sequence of Bacillus licheniformis DSM13, an organism with great industrial potential.</title>
        <authorList>
            <person name="Veith B."/>
            <person name="Herzberg C."/>
            <person name="Steckel S."/>
            <person name="Feesche J."/>
            <person name="Maurer K.H."/>
            <person name="Ehrenreich P."/>
            <person name="Baeumer S."/>
            <person name="Henne A."/>
            <person name="Liesegang H."/>
            <person name="Merkl R."/>
            <person name="Ehrenreich A."/>
            <person name="Gottschalk G."/>
        </authorList>
    </citation>
    <scope>NUCLEOTIDE SEQUENCE [LARGE SCALE GENOMIC DNA]</scope>
    <source>
        <strain>ATCC 14580 / DSM 13 / JCM 2505 / CCUG 7422 / NBRC 12200 / NCIMB 9375 / NCTC 10341 / NRRL NRS-1264 / Gibson 46</strain>
    </source>
</reference>
<reference key="2">
    <citation type="journal article" date="2004" name="Genome Biol.">
        <title>Complete genome sequence of the industrial bacterium Bacillus licheniformis and comparisons with closely related Bacillus species.</title>
        <authorList>
            <person name="Rey M.W."/>
            <person name="Ramaiya P."/>
            <person name="Nelson B.A."/>
            <person name="Brody-Karpin S.D."/>
            <person name="Zaretsky E.J."/>
            <person name="Tang M."/>
            <person name="Lopez de Leon A."/>
            <person name="Xiang H."/>
            <person name="Gusti V."/>
            <person name="Clausen I.G."/>
            <person name="Olsen P.B."/>
            <person name="Rasmussen M.D."/>
            <person name="Andersen J.T."/>
            <person name="Joergensen P.L."/>
            <person name="Larsen T.S."/>
            <person name="Sorokin A."/>
            <person name="Bolotin A."/>
            <person name="Lapidus A."/>
            <person name="Galleron N."/>
            <person name="Ehrlich S.D."/>
            <person name="Berka R.M."/>
        </authorList>
    </citation>
    <scope>NUCLEOTIDE SEQUENCE [LARGE SCALE GENOMIC DNA]</scope>
    <source>
        <strain>ATCC 14580 / DSM 13 / JCM 2505 / CCUG 7422 / NBRC 12200 / NCIMB 9375 / NCTC 10341 / NRRL NRS-1264 / Gibson 46</strain>
    </source>
</reference>
<protein>
    <recommendedName>
        <fullName evidence="1">Methionyl-tRNA formyltransferase</fullName>
        <ecNumber evidence="1">2.1.2.9</ecNumber>
    </recommendedName>
</protein>